<gene>
    <name evidence="4" type="ordered locus">YDR154C</name>
</gene>
<reference key="1">
    <citation type="journal article" date="1997" name="Nature">
        <title>The nucleotide sequence of Saccharomyces cerevisiae chromosome IV.</title>
        <authorList>
            <person name="Jacq C."/>
            <person name="Alt-Moerbe J."/>
            <person name="Andre B."/>
            <person name="Arnold W."/>
            <person name="Bahr A."/>
            <person name="Ballesta J.P.G."/>
            <person name="Bargues M."/>
            <person name="Baron L."/>
            <person name="Becker A."/>
            <person name="Biteau N."/>
            <person name="Bloecker H."/>
            <person name="Blugeon C."/>
            <person name="Boskovic J."/>
            <person name="Brandt P."/>
            <person name="Brueckner M."/>
            <person name="Buitrago M.J."/>
            <person name="Coster F."/>
            <person name="Delaveau T."/>
            <person name="del Rey F."/>
            <person name="Dujon B."/>
            <person name="Eide L.G."/>
            <person name="Garcia-Cantalejo J.M."/>
            <person name="Goffeau A."/>
            <person name="Gomez-Peris A."/>
            <person name="Granotier C."/>
            <person name="Hanemann V."/>
            <person name="Hankeln T."/>
            <person name="Hoheisel J.D."/>
            <person name="Jaeger W."/>
            <person name="Jimenez A."/>
            <person name="Jonniaux J.-L."/>
            <person name="Kraemer C."/>
            <person name="Kuester H."/>
            <person name="Laamanen P."/>
            <person name="Legros Y."/>
            <person name="Louis E.J."/>
            <person name="Moeller-Rieker S."/>
            <person name="Monnet A."/>
            <person name="Moro M."/>
            <person name="Mueller-Auer S."/>
            <person name="Nussbaumer B."/>
            <person name="Paricio N."/>
            <person name="Paulin L."/>
            <person name="Perea J."/>
            <person name="Perez-Alonso M."/>
            <person name="Perez-Ortin J.E."/>
            <person name="Pohl T.M."/>
            <person name="Prydz H."/>
            <person name="Purnelle B."/>
            <person name="Rasmussen S.W."/>
            <person name="Remacha M.A."/>
            <person name="Revuelta J.L."/>
            <person name="Rieger M."/>
            <person name="Salom D."/>
            <person name="Saluz H.P."/>
            <person name="Saiz J.E."/>
            <person name="Saren A.-M."/>
            <person name="Schaefer M."/>
            <person name="Scharfe M."/>
            <person name="Schmidt E.R."/>
            <person name="Schneider C."/>
            <person name="Scholler P."/>
            <person name="Schwarz S."/>
            <person name="Soler-Mira A."/>
            <person name="Urrestarazu L.A."/>
            <person name="Verhasselt P."/>
            <person name="Vissers S."/>
            <person name="Voet M."/>
            <person name="Volckaert G."/>
            <person name="Wagner G."/>
            <person name="Wambutt R."/>
            <person name="Wedler E."/>
            <person name="Wedler H."/>
            <person name="Woelfl S."/>
            <person name="Harris D.E."/>
            <person name="Bowman S."/>
            <person name="Brown D."/>
            <person name="Churcher C.M."/>
            <person name="Connor R."/>
            <person name="Dedman K."/>
            <person name="Gentles S."/>
            <person name="Hamlin N."/>
            <person name="Hunt S."/>
            <person name="Jones L."/>
            <person name="McDonald S."/>
            <person name="Murphy L.D."/>
            <person name="Niblett D."/>
            <person name="Odell C."/>
            <person name="Oliver K."/>
            <person name="Rajandream M.A."/>
            <person name="Richards C."/>
            <person name="Shore L."/>
            <person name="Walsh S.V."/>
            <person name="Barrell B.G."/>
            <person name="Dietrich F.S."/>
            <person name="Mulligan J.T."/>
            <person name="Allen E."/>
            <person name="Araujo R."/>
            <person name="Aviles E."/>
            <person name="Berno A."/>
            <person name="Carpenter J."/>
            <person name="Chen E."/>
            <person name="Cherry J.M."/>
            <person name="Chung E."/>
            <person name="Duncan M."/>
            <person name="Hunicke-Smith S."/>
            <person name="Hyman R.W."/>
            <person name="Komp C."/>
            <person name="Lashkari D."/>
            <person name="Lew H."/>
            <person name="Lin D."/>
            <person name="Mosedale D."/>
            <person name="Nakahara K."/>
            <person name="Namath A."/>
            <person name="Oefner P."/>
            <person name="Oh C."/>
            <person name="Petel F.X."/>
            <person name="Roberts D."/>
            <person name="Schramm S."/>
            <person name="Schroeder M."/>
            <person name="Shogren T."/>
            <person name="Shroff N."/>
            <person name="Winant A."/>
            <person name="Yelton M.A."/>
            <person name="Botstein D."/>
            <person name="Davis R.W."/>
            <person name="Johnston M."/>
            <person name="Andrews S."/>
            <person name="Brinkman R."/>
            <person name="Cooper J."/>
            <person name="Ding H."/>
            <person name="Du Z."/>
            <person name="Favello A."/>
            <person name="Fulton L."/>
            <person name="Gattung S."/>
            <person name="Greco T."/>
            <person name="Hallsworth K."/>
            <person name="Hawkins J."/>
            <person name="Hillier L.W."/>
            <person name="Jier M."/>
            <person name="Johnson D."/>
            <person name="Johnston L."/>
            <person name="Kirsten J."/>
            <person name="Kucaba T."/>
            <person name="Langston Y."/>
            <person name="Latreille P."/>
            <person name="Le T."/>
            <person name="Mardis E."/>
            <person name="Menezes S."/>
            <person name="Miller N."/>
            <person name="Nhan M."/>
            <person name="Pauley A."/>
            <person name="Peluso D."/>
            <person name="Rifkin L."/>
            <person name="Riles L."/>
            <person name="Taich A."/>
            <person name="Trevaskis E."/>
            <person name="Vignati D."/>
            <person name="Wilcox L."/>
            <person name="Wohldman P."/>
            <person name="Vaudin M."/>
            <person name="Wilson R."/>
            <person name="Waterston R."/>
            <person name="Albermann K."/>
            <person name="Hani J."/>
            <person name="Heumann K."/>
            <person name="Kleine K."/>
            <person name="Mewes H.-W."/>
            <person name="Zollner A."/>
            <person name="Zaccaria P."/>
        </authorList>
    </citation>
    <scope>NUCLEOTIDE SEQUENCE [LARGE SCALE GENOMIC DNA]</scope>
    <source>
        <strain>ATCC 204508 / S288c</strain>
    </source>
</reference>
<reference key="2">
    <citation type="journal article" date="2014" name="G3 (Bethesda)">
        <title>The reference genome sequence of Saccharomyces cerevisiae: Then and now.</title>
        <authorList>
            <person name="Engel S.R."/>
            <person name="Dietrich F.S."/>
            <person name="Fisk D.G."/>
            <person name="Binkley G."/>
            <person name="Balakrishnan R."/>
            <person name="Costanzo M.C."/>
            <person name="Dwight S.S."/>
            <person name="Hitz B.C."/>
            <person name="Karra K."/>
            <person name="Nash R.S."/>
            <person name="Weng S."/>
            <person name="Wong E.D."/>
            <person name="Lloyd P."/>
            <person name="Skrzypek M.S."/>
            <person name="Miyasato S.R."/>
            <person name="Simison M."/>
            <person name="Cherry J.M."/>
        </authorList>
    </citation>
    <scope>GENOME REANNOTATION</scope>
    <source>
        <strain>ATCC 204508 / S288c</strain>
    </source>
</reference>
<reference key="3">
    <citation type="journal article" date="2003" name="Science">
        <title>Yeast genes that enhance the toxicity of a mutant huntingtin fragment or alpha-synuclein.</title>
        <authorList>
            <person name="Willingham S."/>
            <person name="Outeiro T.F."/>
            <person name="DeVit M.J."/>
            <person name="Lindquist S.L."/>
            <person name="Muchowski P.J."/>
        </authorList>
    </citation>
    <scope>DISRUPTION PHENOTYPE</scope>
</reference>
<proteinExistence type="uncertain"/>
<feature type="chain" id="PRO_0000430982" description="Putative uncharacterized protein YDR154C">
    <location>
        <begin position="1"/>
        <end position="116"/>
    </location>
</feature>
<evidence type="ECO:0000269" key="1">
    <source>
    </source>
</evidence>
<evidence type="ECO:0000305" key="2"/>
<evidence type="ECO:0000305" key="3">
    <source>
    </source>
</evidence>
<evidence type="ECO:0000312" key="4">
    <source>
        <dbReference type="SGD" id="S000002561"/>
    </source>
</evidence>
<protein>
    <recommendedName>
        <fullName evidence="2">Putative uncharacterized protein YDR154C</fullName>
    </recommendedName>
</protein>
<name>YD154_YEAST</name>
<sequence>MKTSRSTTTDQVCCPWPTPVQTPTVLNSSSPPFHAHGWTVSMLSLVKLLTVTTSLRRLSPWVLLPVPPRLELLLPSPVNYNRSAWNNTAKIETNYSLLNYMYMYKVCVCMTINSYN</sequence>
<dbReference type="EMBL" id="KJ412218">
    <property type="protein sequence ID" value="AHX39261.1"/>
    <property type="molecule type" value="Genomic_DNA"/>
</dbReference>
<dbReference type="PIR" id="S69758">
    <property type="entry name" value="S69758"/>
</dbReference>
<dbReference type="STRING" id="4932.YDR154C"/>
<dbReference type="PaxDb" id="4932-YDR154C"/>
<dbReference type="EnsemblFungi" id="YDR154C_mRNA">
    <property type="protein sequence ID" value="YDR154C"/>
    <property type="gene ID" value="YDR154C"/>
</dbReference>
<dbReference type="AGR" id="SGD:S000002561"/>
<dbReference type="SGD" id="S000002561">
    <property type="gene designation" value="YDR154C"/>
</dbReference>
<dbReference type="HOGENOM" id="CLU_2098730_0_0_1"/>
<dbReference type="ChiTaRS" id="YDR154C">
    <property type="organism name" value="yeast"/>
</dbReference>
<accession>A0A023PZA4</accession>
<comment type="disruption phenotype">
    <text evidence="1">Enhances the toxicity of heterologously expressed alpha-synuclein.</text>
</comment>
<comment type="miscellaneous">
    <text evidence="2">Partially overlaps CPR1. Disruption phenotypes caused by deletion of this gene may also be a result of a defect in its overlapping gene.</text>
</comment>
<comment type="caution">
    <text evidence="3">Product of a dubious gene prediction unlikely to encode a functional protein. Because of that it is not part of the S.cerevisiae S288c complete/reference proteome set.</text>
</comment>
<organism>
    <name type="scientific">Saccharomyces cerevisiae (strain ATCC 204508 / S288c)</name>
    <name type="common">Baker's yeast</name>
    <dbReference type="NCBI Taxonomy" id="559292"/>
    <lineage>
        <taxon>Eukaryota</taxon>
        <taxon>Fungi</taxon>
        <taxon>Dikarya</taxon>
        <taxon>Ascomycota</taxon>
        <taxon>Saccharomycotina</taxon>
        <taxon>Saccharomycetes</taxon>
        <taxon>Saccharomycetales</taxon>
        <taxon>Saccharomycetaceae</taxon>
        <taxon>Saccharomyces</taxon>
    </lineage>
</organism>